<evidence type="ECO:0000255" key="1">
    <source>
        <dbReference type="HAMAP-Rule" id="MF_01310"/>
    </source>
</evidence>
<evidence type="ECO:0000305" key="2"/>
<keyword id="KW-1185">Reference proteome</keyword>
<keyword id="KW-0687">Ribonucleoprotein</keyword>
<keyword id="KW-0689">Ribosomal protein</keyword>
<keyword id="KW-0694">RNA-binding</keyword>
<keyword id="KW-0699">rRNA-binding</keyword>
<accession>Q3B6D8</accession>
<dbReference type="EMBL" id="CP000096">
    <property type="protein sequence ID" value="ABB23093.1"/>
    <property type="molecule type" value="Genomic_DNA"/>
</dbReference>
<dbReference type="RefSeq" id="WP_011356968.1">
    <property type="nucleotide sequence ID" value="NC_007512.1"/>
</dbReference>
<dbReference type="SMR" id="Q3B6D8"/>
<dbReference type="STRING" id="319225.Plut_0205"/>
<dbReference type="KEGG" id="plt:Plut_0205"/>
<dbReference type="eggNOG" id="COG0100">
    <property type="taxonomic scope" value="Bacteria"/>
</dbReference>
<dbReference type="HOGENOM" id="CLU_072439_5_0_10"/>
<dbReference type="OrthoDB" id="9806415at2"/>
<dbReference type="Proteomes" id="UP000002709">
    <property type="component" value="Chromosome"/>
</dbReference>
<dbReference type="GO" id="GO:1990904">
    <property type="term" value="C:ribonucleoprotein complex"/>
    <property type="evidence" value="ECO:0007669"/>
    <property type="project" value="UniProtKB-KW"/>
</dbReference>
<dbReference type="GO" id="GO:0005840">
    <property type="term" value="C:ribosome"/>
    <property type="evidence" value="ECO:0007669"/>
    <property type="project" value="UniProtKB-KW"/>
</dbReference>
<dbReference type="GO" id="GO:0019843">
    <property type="term" value="F:rRNA binding"/>
    <property type="evidence" value="ECO:0007669"/>
    <property type="project" value="UniProtKB-UniRule"/>
</dbReference>
<dbReference type="GO" id="GO:0003735">
    <property type="term" value="F:structural constituent of ribosome"/>
    <property type="evidence" value="ECO:0007669"/>
    <property type="project" value="InterPro"/>
</dbReference>
<dbReference type="GO" id="GO:0006412">
    <property type="term" value="P:translation"/>
    <property type="evidence" value="ECO:0007669"/>
    <property type="project" value="UniProtKB-UniRule"/>
</dbReference>
<dbReference type="FunFam" id="3.30.420.80:FF:000004">
    <property type="entry name" value="30S ribosomal protein S11"/>
    <property type="match status" value="1"/>
</dbReference>
<dbReference type="Gene3D" id="3.30.420.80">
    <property type="entry name" value="Ribosomal protein S11"/>
    <property type="match status" value="1"/>
</dbReference>
<dbReference type="HAMAP" id="MF_01310">
    <property type="entry name" value="Ribosomal_uS11"/>
    <property type="match status" value="1"/>
</dbReference>
<dbReference type="InterPro" id="IPR001971">
    <property type="entry name" value="Ribosomal_uS11"/>
</dbReference>
<dbReference type="InterPro" id="IPR019981">
    <property type="entry name" value="Ribosomal_uS11_bac-type"/>
</dbReference>
<dbReference type="InterPro" id="IPR018102">
    <property type="entry name" value="Ribosomal_uS11_CS"/>
</dbReference>
<dbReference type="InterPro" id="IPR036967">
    <property type="entry name" value="Ribosomal_uS11_sf"/>
</dbReference>
<dbReference type="NCBIfam" id="NF003698">
    <property type="entry name" value="PRK05309.1"/>
    <property type="match status" value="1"/>
</dbReference>
<dbReference type="NCBIfam" id="TIGR03632">
    <property type="entry name" value="uS11_bact"/>
    <property type="match status" value="1"/>
</dbReference>
<dbReference type="PANTHER" id="PTHR11759">
    <property type="entry name" value="40S RIBOSOMAL PROTEIN S14/30S RIBOSOMAL PROTEIN S11"/>
    <property type="match status" value="1"/>
</dbReference>
<dbReference type="Pfam" id="PF00411">
    <property type="entry name" value="Ribosomal_S11"/>
    <property type="match status" value="1"/>
</dbReference>
<dbReference type="PIRSF" id="PIRSF002131">
    <property type="entry name" value="Ribosomal_S11"/>
    <property type="match status" value="1"/>
</dbReference>
<dbReference type="SUPFAM" id="SSF53137">
    <property type="entry name" value="Translational machinery components"/>
    <property type="match status" value="1"/>
</dbReference>
<dbReference type="PROSITE" id="PS00054">
    <property type="entry name" value="RIBOSOMAL_S11"/>
    <property type="match status" value="1"/>
</dbReference>
<proteinExistence type="inferred from homology"/>
<reference key="1">
    <citation type="submission" date="2005-08" db="EMBL/GenBank/DDBJ databases">
        <title>Complete sequence of Pelodictyon luteolum DSM 273.</title>
        <authorList>
            <consortium name="US DOE Joint Genome Institute"/>
            <person name="Copeland A."/>
            <person name="Lucas S."/>
            <person name="Lapidus A."/>
            <person name="Barry K."/>
            <person name="Detter J.C."/>
            <person name="Glavina T."/>
            <person name="Hammon N."/>
            <person name="Israni S."/>
            <person name="Pitluck S."/>
            <person name="Bryant D."/>
            <person name="Schmutz J."/>
            <person name="Larimer F."/>
            <person name="Land M."/>
            <person name="Kyrpides N."/>
            <person name="Ivanova N."/>
            <person name="Richardson P."/>
        </authorList>
    </citation>
    <scope>NUCLEOTIDE SEQUENCE [LARGE SCALE GENOMIC DNA]</scope>
    <source>
        <strain>DSM 273 / BCRC 81028 / 2530</strain>
    </source>
</reference>
<organism>
    <name type="scientific">Chlorobium luteolum (strain DSM 273 / BCRC 81028 / 2530)</name>
    <name type="common">Pelodictyon luteolum</name>
    <dbReference type="NCBI Taxonomy" id="319225"/>
    <lineage>
        <taxon>Bacteria</taxon>
        <taxon>Pseudomonadati</taxon>
        <taxon>Chlorobiota</taxon>
        <taxon>Chlorobiia</taxon>
        <taxon>Chlorobiales</taxon>
        <taxon>Chlorobiaceae</taxon>
        <taxon>Chlorobium/Pelodictyon group</taxon>
        <taxon>Pelodictyon</taxon>
    </lineage>
</organism>
<feature type="chain" id="PRO_0000230415" description="Small ribosomal subunit protein uS11">
    <location>
        <begin position="1"/>
        <end position="127"/>
    </location>
</feature>
<name>RS11_CHLL3</name>
<sequence>MATVSRKKKKVKVTPEGVVHIKASFNNIMVTITDVQGNTVSWSSAGKNGFRGSKKNTPYASQVTSEGAAKEAYDLGMRHVDVFIKGPGAGRDAAIRALQGAGLEVRSIKDITPLPHNGCRPPKRRRV</sequence>
<gene>
    <name evidence="1" type="primary">rpsK</name>
    <name type="ordered locus">Plut_0205</name>
</gene>
<comment type="function">
    <text evidence="1">Located on the platform of the 30S subunit, it bridges several disparate RNA helices of the 16S rRNA. Forms part of the Shine-Dalgarno cleft in the 70S ribosome.</text>
</comment>
<comment type="subunit">
    <text evidence="1">Part of the 30S ribosomal subunit. Interacts with proteins S7 and S18. Binds to IF-3.</text>
</comment>
<comment type="similarity">
    <text evidence="1">Belongs to the universal ribosomal protein uS11 family.</text>
</comment>
<protein>
    <recommendedName>
        <fullName evidence="1">Small ribosomal subunit protein uS11</fullName>
    </recommendedName>
    <alternativeName>
        <fullName evidence="2">30S ribosomal protein S11</fullName>
    </alternativeName>
</protein>